<evidence type="ECO:0000255" key="1">
    <source>
        <dbReference type="HAMAP-Rule" id="MF_01325"/>
    </source>
</evidence>
<evidence type="ECO:0000305" key="2"/>
<organism>
    <name type="scientific">Brachyspira hyodysenteriae (strain ATCC 49526 / WA1)</name>
    <dbReference type="NCBI Taxonomy" id="565034"/>
    <lineage>
        <taxon>Bacteria</taxon>
        <taxon>Pseudomonadati</taxon>
        <taxon>Spirochaetota</taxon>
        <taxon>Spirochaetia</taxon>
        <taxon>Brachyspirales</taxon>
        <taxon>Brachyspiraceae</taxon>
        <taxon>Brachyspira</taxon>
    </lineage>
</organism>
<protein>
    <recommendedName>
        <fullName evidence="1">Large ribosomal subunit protein uL3</fullName>
    </recommendedName>
    <alternativeName>
        <fullName evidence="2">50S ribosomal protein L3</fullName>
    </alternativeName>
</protein>
<keyword id="KW-0687">Ribonucleoprotein</keyword>
<keyword id="KW-0689">Ribosomal protein</keyword>
<keyword id="KW-0694">RNA-binding</keyword>
<keyword id="KW-0699">rRNA-binding</keyword>
<feature type="chain" id="PRO_1000165870" description="Large ribosomal subunit protein uL3">
    <location>
        <begin position="1"/>
        <end position="217"/>
    </location>
</feature>
<sequence>MVGIIGKKLGMTTVFDETGNAIAVTVVEAGPCTVMQIRDNEKDGYSAIQLGYGAVKEKHLKKPQIGQFKKANLEPKKYLKEFRMDDASSYTVGQELKADIFQAGDFIDVSSLSKGRGFAGVMKRHNYDGGPMSHGSNFRRRAGSIGCNSYPARVWKGKGMPGHMGNTLTTIQNLKVVEIRPDDNLIMIKGAIPGAINSIVKLTSAVKKRNKKKNSMN</sequence>
<name>RL3_BRAHW</name>
<proteinExistence type="inferred from homology"/>
<accession>C0QVZ6</accession>
<gene>
    <name evidence="1" type="primary">rplC</name>
    <name type="ordered locus">BHWA1_02124</name>
</gene>
<dbReference type="EMBL" id="CP001357">
    <property type="protein sequence ID" value="ACN84582.1"/>
    <property type="molecule type" value="Genomic_DNA"/>
</dbReference>
<dbReference type="RefSeq" id="WP_012671619.1">
    <property type="nucleotide sequence ID" value="NC_012225.1"/>
</dbReference>
<dbReference type="SMR" id="C0QVZ6"/>
<dbReference type="STRING" id="565034.BHWA1_02124"/>
<dbReference type="GeneID" id="63963276"/>
<dbReference type="KEGG" id="bhy:BHWA1_02124"/>
<dbReference type="eggNOG" id="COG0087">
    <property type="taxonomic scope" value="Bacteria"/>
</dbReference>
<dbReference type="HOGENOM" id="CLU_044142_4_1_12"/>
<dbReference type="Proteomes" id="UP000001803">
    <property type="component" value="Chromosome"/>
</dbReference>
<dbReference type="GO" id="GO:0022625">
    <property type="term" value="C:cytosolic large ribosomal subunit"/>
    <property type="evidence" value="ECO:0007669"/>
    <property type="project" value="TreeGrafter"/>
</dbReference>
<dbReference type="GO" id="GO:0019843">
    <property type="term" value="F:rRNA binding"/>
    <property type="evidence" value="ECO:0007669"/>
    <property type="project" value="UniProtKB-UniRule"/>
</dbReference>
<dbReference type="GO" id="GO:0003735">
    <property type="term" value="F:structural constituent of ribosome"/>
    <property type="evidence" value="ECO:0007669"/>
    <property type="project" value="InterPro"/>
</dbReference>
<dbReference type="GO" id="GO:0006412">
    <property type="term" value="P:translation"/>
    <property type="evidence" value="ECO:0007669"/>
    <property type="project" value="UniProtKB-UniRule"/>
</dbReference>
<dbReference type="FunFam" id="2.40.30.10:FF:000004">
    <property type="entry name" value="50S ribosomal protein L3"/>
    <property type="match status" value="1"/>
</dbReference>
<dbReference type="FunFam" id="3.30.160.810:FF:000001">
    <property type="entry name" value="50S ribosomal protein L3"/>
    <property type="match status" value="1"/>
</dbReference>
<dbReference type="Gene3D" id="3.30.160.810">
    <property type="match status" value="1"/>
</dbReference>
<dbReference type="Gene3D" id="2.40.30.10">
    <property type="entry name" value="Translation factors"/>
    <property type="match status" value="1"/>
</dbReference>
<dbReference type="HAMAP" id="MF_01325_B">
    <property type="entry name" value="Ribosomal_uL3_B"/>
    <property type="match status" value="1"/>
</dbReference>
<dbReference type="InterPro" id="IPR000597">
    <property type="entry name" value="Ribosomal_uL3"/>
</dbReference>
<dbReference type="InterPro" id="IPR019927">
    <property type="entry name" value="Ribosomal_uL3_bac/org-type"/>
</dbReference>
<dbReference type="InterPro" id="IPR019926">
    <property type="entry name" value="Ribosomal_uL3_CS"/>
</dbReference>
<dbReference type="InterPro" id="IPR009000">
    <property type="entry name" value="Transl_B-barrel_sf"/>
</dbReference>
<dbReference type="NCBIfam" id="TIGR03625">
    <property type="entry name" value="L3_bact"/>
    <property type="match status" value="1"/>
</dbReference>
<dbReference type="PANTHER" id="PTHR11229">
    <property type="entry name" value="50S RIBOSOMAL PROTEIN L3"/>
    <property type="match status" value="1"/>
</dbReference>
<dbReference type="PANTHER" id="PTHR11229:SF16">
    <property type="entry name" value="LARGE RIBOSOMAL SUBUNIT PROTEIN UL3C"/>
    <property type="match status" value="1"/>
</dbReference>
<dbReference type="Pfam" id="PF00297">
    <property type="entry name" value="Ribosomal_L3"/>
    <property type="match status" value="1"/>
</dbReference>
<dbReference type="SUPFAM" id="SSF50447">
    <property type="entry name" value="Translation proteins"/>
    <property type="match status" value="1"/>
</dbReference>
<dbReference type="PROSITE" id="PS00474">
    <property type="entry name" value="RIBOSOMAL_L3"/>
    <property type="match status" value="1"/>
</dbReference>
<reference key="1">
    <citation type="journal article" date="2009" name="PLoS ONE">
        <title>Genome sequence of the pathogenic intestinal spirochete Brachyspira hyodysenteriae reveals adaptations to its lifestyle in the porcine large intestine.</title>
        <authorList>
            <person name="Bellgard M.I."/>
            <person name="Wanchanthuek P."/>
            <person name="La T."/>
            <person name="Ryan K."/>
            <person name="Moolhuijzen P."/>
            <person name="Albertyn Z."/>
            <person name="Shaban B."/>
            <person name="Motro Y."/>
            <person name="Dunn D.S."/>
            <person name="Schibeci D."/>
            <person name="Hunter A."/>
            <person name="Barrero R."/>
            <person name="Phillips N.D."/>
            <person name="Hampson D.J."/>
        </authorList>
    </citation>
    <scope>NUCLEOTIDE SEQUENCE [LARGE SCALE GENOMIC DNA]</scope>
    <source>
        <strain>ATCC 49526 / WA1</strain>
    </source>
</reference>
<comment type="function">
    <text evidence="1">One of the primary rRNA binding proteins, it binds directly near the 3'-end of the 23S rRNA, where it nucleates assembly of the 50S subunit.</text>
</comment>
<comment type="subunit">
    <text evidence="1">Part of the 50S ribosomal subunit. Forms a cluster with proteins L14 and L19.</text>
</comment>
<comment type="similarity">
    <text evidence="1">Belongs to the universal ribosomal protein uL3 family.</text>
</comment>